<accession>Q8WP19</accession>
<feature type="chain" id="PRO_0000261141" description="Cryptochrome-1">
    <location>
        <begin position="1"/>
        <end position="586"/>
    </location>
</feature>
<feature type="domain" description="Photolyase/cryptochrome alpha/beta">
    <location>
        <begin position="3"/>
        <end position="132"/>
    </location>
</feature>
<feature type="region of interest" description="Required for inhibition of CLOCK-BMAL1-mediated transcription" evidence="2">
    <location>
        <begin position="371"/>
        <end position="470"/>
    </location>
</feature>
<feature type="region of interest" description="Interaction with TIMELESS" evidence="2">
    <location>
        <begin position="471"/>
        <end position="493"/>
    </location>
</feature>
<feature type="region of interest" description="Disordered" evidence="4">
    <location>
        <begin position="545"/>
        <end position="586"/>
    </location>
</feature>
<feature type="short sequence motif" description="LIR 1" evidence="2">
    <location>
        <begin position="50"/>
        <end position="54"/>
    </location>
</feature>
<feature type="short sequence motif" description="LIR 2" evidence="2">
    <location>
        <begin position="82"/>
        <end position="87"/>
    </location>
</feature>
<feature type="short sequence motif" description="LIR 3" evidence="2">
    <location>
        <begin position="151"/>
        <end position="156"/>
    </location>
</feature>
<feature type="short sequence motif" description="LIR 4" evidence="2">
    <location>
        <begin position="255"/>
        <end position="260"/>
    </location>
</feature>
<feature type="short sequence motif" description="LIR 5" evidence="2">
    <location>
        <begin position="271"/>
        <end position="276"/>
    </location>
</feature>
<feature type="short sequence motif" description="LIR 6" evidence="2">
    <location>
        <begin position="285"/>
        <end position="290"/>
    </location>
</feature>
<feature type="short sequence motif" description="LIR 7" evidence="2">
    <location>
        <begin position="335"/>
        <end position="339"/>
    </location>
</feature>
<feature type="short sequence motif" description="LIR 8" evidence="2">
    <location>
        <begin position="379"/>
        <end position="384"/>
    </location>
</feature>
<feature type="short sequence motif" description="LIR 9" evidence="2">
    <location>
        <begin position="395"/>
        <end position="400"/>
    </location>
</feature>
<feature type="short sequence motif" description="LIR 10" evidence="2">
    <location>
        <begin position="411"/>
        <end position="416"/>
    </location>
</feature>
<feature type="short sequence motif" description="LIR 11" evidence="2">
    <location>
        <begin position="430"/>
        <end position="435"/>
    </location>
</feature>
<feature type="short sequence motif" description="LIR 12" evidence="2">
    <location>
        <begin position="486"/>
        <end position="491"/>
    </location>
</feature>
<feature type="short sequence motif" description="LIR 13" evidence="2">
    <location>
        <begin position="492"/>
        <end position="497"/>
    </location>
</feature>
<feature type="compositionally biased region" description="Polar residues" evidence="4">
    <location>
        <begin position="545"/>
        <end position="559"/>
    </location>
</feature>
<feature type="binding site" evidence="1">
    <location>
        <position position="252"/>
    </location>
    <ligand>
        <name>FAD</name>
        <dbReference type="ChEBI" id="CHEBI:57692"/>
    </ligand>
</feature>
<feature type="binding site" evidence="2">
    <location>
        <position position="289"/>
    </location>
    <ligand>
        <name>FAD</name>
        <dbReference type="ChEBI" id="CHEBI:57692"/>
    </ligand>
</feature>
<feature type="binding site" evidence="2">
    <location>
        <position position="355"/>
    </location>
    <ligand>
        <name>FAD</name>
        <dbReference type="ChEBI" id="CHEBI:57692"/>
    </ligand>
</feature>
<feature type="binding site" evidence="2">
    <location>
        <begin position="387"/>
        <end position="389"/>
    </location>
    <ligand>
        <name>FAD</name>
        <dbReference type="ChEBI" id="CHEBI:57692"/>
    </ligand>
</feature>
<feature type="modified residue" description="Phosphoserine; by AMPK" evidence="2">
    <location>
        <position position="71"/>
    </location>
</feature>
<feature type="modified residue" description="Phosphoserine; by MAPK" evidence="2">
    <location>
        <position position="247"/>
    </location>
</feature>
<feature type="modified residue" description="Phosphoserine; by AMPK" evidence="2">
    <location>
        <position position="280"/>
    </location>
</feature>
<feature type="modified residue" description="Phosphoserine" evidence="2">
    <location>
        <position position="568"/>
    </location>
</feature>
<feature type="cross-link" description="Glycyl lysine isopeptide (Lys-Gly) (interchain with G-Cter in ubiquitin)" evidence="2">
    <location>
        <position position="11"/>
    </location>
</feature>
<feature type="cross-link" description="Glycyl lysine isopeptide (Lys-Gly) (interchain with G-Cter in ubiquitin)" evidence="2">
    <location>
        <position position="107"/>
    </location>
</feature>
<feature type="cross-link" description="Glycyl lysine isopeptide (Lys-Gly) (interchain with G-Cter in ubiquitin)" evidence="2">
    <location>
        <position position="159"/>
    </location>
</feature>
<feature type="cross-link" description="Glycyl lysine isopeptide (Lys-Gly) (interchain with G-Cter in ubiquitin)" evidence="2">
    <location>
        <position position="329"/>
    </location>
</feature>
<feature type="cross-link" description="Glycyl lysine isopeptide (Lys-Gly) (interchain with G-Cter in ubiquitin)" evidence="2">
    <location>
        <position position="485"/>
    </location>
</feature>
<feature type="cross-link" description="Glycyl lysine isopeptide (Lys-Gly) (interchain with G-Cter in ubiquitin)" evidence="2">
    <location>
        <position position="565"/>
    </location>
</feature>
<dbReference type="EMBL" id="AB074458">
    <property type="protein sequence ID" value="BAB72089.1"/>
    <property type="molecule type" value="mRNA"/>
</dbReference>
<dbReference type="SMR" id="Q8WP19"/>
<dbReference type="STRING" id="9541.ENSMFAP00000040668"/>
<dbReference type="eggNOG" id="KOG0133">
    <property type="taxonomic scope" value="Eukaryota"/>
</dbReference>
<dbReference type="Proteomes" id="UP000233100">
    <property type="component" value="Unplaced"/>
</dbReference>
<dbReference type="GO" id="GO:0005737">
    <property type="term" value="C:cytoplasm"/>
    <property type="evidence" value="ECO:0007669"/>
    <property type="project" value="UniProtKB-SubCell"/>
</dbReference>
<dbReference type="GO" id="GO:0005634">
    <property type="term" value="C:nucleus"/>
    <property type="evidence" value="ECO:0000250"/>
    <property type="project" value="UniProtKB"/>
</dbReference>
<dbReference type="GO" id="GO:0003677">
    <property type="term" value="F:DNA binding"/>
    <property type="evidence" value="ECO:0007669"/>
    <property type="project" value="TreeGrafter"/>
</dbReference>
<dbReference type="GO" id="GO:0071949">
    <property type="term" value="F:FAD binding"/>
    <property type="evidence" value="ECO:0007669"/>
    <property type="project" value="TreeGrafter"/>
</dbReference>
<dbReference type="GO" id="GO:0009881">
    <property type="term" value="F:photoreceptor activity"/>
    <property type="evidence" value="ECO:0007669"/>
    <property type="project" value="UniProtKB-KW"/>
</dbReference>
<dbReference type="GO" id="GO:0032922">
    <property type="term" value="P:circadian regulation of gene expression"/>
    <property type="evidence" value="ECO:0000250"/>
    <property type="project" value="UniProtKB"/>
</dbReference>
<dbReference type="GO" id="GO:0007623">
    <property type="term" value="P:circadian rhythm"/>
    <property type="evidence" value="ECO:0000250"/>
    <property type="project" value="UniProtKB"/>
</dbReference>
<dbReference type="GO" id="GO:0043153">
    <property type="term" value="P:entrainment of circadian clock by photoperiod"/>
    <property type="evidence" value="ECO:0000250"/>
    <property type="project" value="UniProtKB"/>
</dbReference>
<dbReference type="GO" id="GO:0006094">
    <property type="term" value="P:gluconeogenesis"/>
    <property type="evidence" value="ECO:0000250"/>
    <property type="project" value="UniProtKB"/>
</dbReference>
<dbReference type="GO" id="GO:0042593">
    <property type="term" value="P:glucose homeostasis"/>
    <property type="evidence" value="ECO:0000250"/>
    <property type="project" value="UniProtKB"/>
</dbReference>
<dbReference type="GO" id="GO:0042754">
    <property type="term" value="P:negative regulation of circadian rhythm"/>
    <property type="evidence" value="ECO:0000250"/>
    <property type="project" value="UniProtKB"/>
</dbReference>
<dbReference type="GO" id="GO:0045892">
    <property type="term" value="P:negative regulation of DNA-templated transcription"/>
    <property type="evidence" value="ECO:0000250"/>
    <property type="project" value="UniProtKB"/>
</dbReference>
<dbReference type="GO" id="GO:0045744">
    <property type="term" value="P:negative regulation of G protein-coupled receptor signaling pathway"/>
    <property type="evidence" value="ECO:0000250"/>
    <property type="project" value="UniProtKB"/>
</dbReference>
<dbReference type="GO" id="GO:0045721">
    <property type="term" value="P:negative regulation of gluconeogenesis"/>
    <property type="evidence" value="ECO:0000250"/>
    <property type="project" value="UniProtKB"/>
</dbReference>
<dbReference type="GO" id="GO:2000323">
    <property type="term" value="P:negative regulation of nuclear receptor-mediated glucocorticoid signaling pathway"/>
    <property type="evidence" value="ECO:0000250"/>
    <property type="project" value="UniProtKB"/>
</dbReference>
<dbReference type="GO" id="GO:0031397">
    <property type="term" value="P:negative regulation of protein ubiquitination"/>
    <property type="evidence" value="ECO:0000250"/>
    <property type="project" value="UniProtKB"/>
</dbReference>
<dbReference type="GO" id="GO:0000122">
    <property type="term" value="P:negative regulation of transcription by RNA polymerase II"/>
    <property type="evidence" value="ECO:0000250"/>
    <property type="project" value="UniProtKB"/>
</dbReference>
<dbReference type="GO" id="GO:0031398">
    <property type="term" value="P:positive regulation of protein ubiquitination"/>
    <property type="evidence" value="ECO:0000250"/>
    <property type="project" value="UniProtKB"/>
</dbReference>
<dbReference type="GO" id="GO:0042752">
    <property type="term" value="P:regulation of circadian rhythm"/>
    <property type="evidence" value="ECO:0000250"/>
    <property type="project" value="UniProtKB"/>
</dbReference>
<dbReference type="GO" id="GO:2000001">
    <property type="term" value="P:regulation of DNA damage checkpoint"/>
    <property type="evidence" value="ECO:0000250"/>
    <property type="project" value="UniProtKB"/>
</dbReference>
<dbReference type="GO" id="GO:0014823">
    <property type="term" value="P:response to activity"/>
    <property type="evidence" value="ECO:0000250"/>
    <property type="project" value="UniProtKB"/>
</dbReference>
<dbReference type="GO" id="GO:0033762">
    <property type="term" value="P:response to glucagon"/>
    <property type="evidence" value="ECO:0000250"/>
    <property type="project" value="UniProtKB"/>
</dbReference>
<dbReference type="GO" id="GO:0009416">
    <property type="term" value="P:response to light stimulus"/>
    <property type="evidence" value="ECO:0000250"/>
    <property type="project" value="UniProtKB"/>
</dbReference>
<dbReference type="GO" id="GO:0042770">
    <property type="term" value="P:signal transduction in response to DNA damage"/>
    <property type="evidence" value="ECO:0000250"/>
    <property type="project" value="UniProtKB"/>
</dbReference>
<dbReference type="FunFam" id="1.10.579.10:FF:000001">
    <property type="entry name" value="Cryptochrome 1"/>
    <property type="match status" value="1"/>
</dbReference>
<dbReference type="FunFam" id="1.25.40.80:FF:000002">
    <property type="entry name" value="cryptochrome-1 isoform X1"/>
    <property type="match status" value="1"/>
</dbReference>
<dbReference type="FunFam" id="1.25.40.80:FF:000003">
    <property type="entry name" value="cryptochrome-1 isoform X1"/>
    <property type="match status" value="1"/>
</dbReference>
<dbReference type="FunFam" id="3.40.50.620:FF:000099">
    <property type="entry name" value="cryptochrome-1 isoform X1"/>
    <property type="match status" value="1"/>
</dbReference>
<dbReference type="Gene3D" id="1.25.40.80">
    <property type="match status" value="2"/>
</dbReference>
<dbReference type="Gene3D" id="1.10.579.10">
    <property type="entry name" value="DNA Cyclobutane Dipyrimidine Photolyase, subunit A, domain 3"/>
    <property type="match status" value="1"/>
</dbReference>
<dbReference type="Gene3D" id="3.40.50.620">
    <property type="entry name" value="HUPs"/>
    <property type="match status" value="1"/>
</dbReference>
<dbReference type="InterPro" id="IPR036134">
    <property type="entry name" value="Crypto/Photolyase_FAD-like_sf"/>
</dbReference>
<dbReference type="InterPro" id="IPR036155">
    <property type="entry name" value="Crypto/Photolyase_N_sf"/>
</dbReference>
<dbReference type="InterPro" id="IPR005101">
    <property type="entry name" value="Cryptochr/Photolyase_FAD-bd"/>
</dbReference>
<dbReference type="InterPro" id="IPR002081">
    <property type="entry name" value="Cryptochrome/DNA_photolyase_1"/>
</dbReference>
<dbReference type="InterPro" id="IPR006050">
    <property type="entry name" value="DNA_photolyase_N"/>
</dbReference>
<dbReference type="InterPro" id="IPR014729">
    <property type="entry name" value="Rossmann-like_a/b/a_fold"/>
</dbReference>
<dbReference type="PANTHER" id="PTHR11455">
    <property type="entry name" value="CRYPTOCHROME"/>
    <property type="match status" value="1"/>
</dbReference>
<dbReference type="PANTHER" id="PTHR11455:SF16">
    <property type="entry name" value="CRYPTOCHROME-1"/>
    <property type="match status" value="1"/>
</dbReference>
<dbReference type="Pfam" id="PF00875">
    <property type="entry name" value="DNA_photolyase"/>
    <property type="match status" value="1"/>
</dbReference>
<dbReference type="Pfam" id="PF03441">
    <property type="entry name" value="FAD_binding_7"/>
    <property type="match status" value="1"/>
</dbReference>
<dbReference type="SUPFAM" id="SSF48173">
    <property type="entry name" value="Cryptochrome/photolyase FAD-binding domain"/>
    <property type="match status" value="1"/>
</dbReference>
<dbReference type="SUPFAM" id="SSF52425">
    <property type="entry name" value="Cryptochrome/photolyase, N-terminal domain"/>
    <property type="match status" value="1"/>
</dbReference>
<dbReference type="PROSITE" id="PS51645">
    <property type="entry name" value="PHR_CRY_ALPHA_BETA"/>
    <property type="match status" value="1"/>
</dbReference>
<protein>
    <recommendedName>
        <fullName>Cryptochrome-1</fullName>
    </recommendedName>
</protein>
<reference key="1">
    <citation type="journal article" date="2002" name="BMC Genomics">
        <title>Cynomolgus monkey testicular cDNAs for discovery of novel human genes in the human genome sequence.</title>
        <authorList>
            <person name="Osada N."/>
            <person name="Hida M."/>
            <person name="Kusuda J."/>
            <person name="Tanuma R."/>
            <person name="Hirata M."/>
            <person name="Suto Y."/>
            <person name="Hirai M."/>
            <person name="Terao K."/>
            <person name="Sugano S."/>
            <person name="Hashimoto K."/>
        </authorList>
    </citation>
    <scope>NUCLEOTIDE SEQUENCE [LARGE SCALE MRNA]</scope>
    <source>
        <tissue>Testis</tissue>
    </source>
</reference>
<keyword id="KW-0090">Biological rhythms</keyword>
<keyword id="KW-0157">Chromophore</keyword>
<keyword id="KW-0963">Cytoplasm</keyword>
<keyword id="KW-0274">FAD</keyword>
<keyword id="KW-0285">Flavoprotein</keyword>
<keyword id="KW-1017">Isopeptide bond</keyword>
<keyword id="KW-0547">Nucleotide-binding</keyword>
<keyword id="KW-0539">Nucleus</keyword>
<keyword id="KW-0597">Phosphoprotein</keyword>
<keyword id="KW-0600">Photoreceptor protein</keyword>
<keyword id="KW-0675">Receptor</keyword>
<keyword id="KW-1185">Reference proteome</keyword>
<keyword id="KW-0678">Repressor</keyword>
<keyword id="KW-0716">Sensory transduction</keyword>
<keyword id="KW-0804">Transcription</keyword>
<keyword id="KW-0805">Transcription regulation</keyword>
<keyword id="KW-0832">Ubl conjugation</keyword>
<evidence type="ECO:0000250" key="1"/>
<evidence type="ECO:0000250" key="2">
    <source>
        <dbReference type="UniProtKB" id="P97784"/>
    </source>
</evidence>
<evidence type="ECO:0000250" key="3">
    <source>
        <dbReference type="UniProtKB" id="Q16526"/>
    </source>
</evidence>
<evidence type="ECO:0000256" key="4">
    <source>
        <dbReference type="SAM" id="MobiDB-lite"/>
    </source>
</evidence>
<evidence type="ECO:0000305" key="5"/>
<gene>
    <name type="primary">CRY1</name>
    <name type="ORF">QtsA-16837</name>
</gene>
<name>CRY1_MACFA</name>
<proteinExistence type="evidence at transcript level"/>
<sequence length="586" mass="66497">MGVNAVHWFRKGLRLHDNPALKECIQGADTIRCVYILDPWFAGSSNVGINRWRFLLQCLEDLDANLRKLNSRLFVIRGQPADVFPRLFKEWNITKLSIEYDSEPFGKERDAAIKKLATEAGVEVIVRISHTLYDLDKIIELNGGQPPLTYKRFQTLISKMEPLEIPVETITSEVIEKCTTPLSDDHDEKYGVPSLEELGFDTDGLSSAVWPGGETEALTRLERHLERKAWVANFERPRMNANSLLASPTGLSPYLRFGCLSCRLFYFKLTDLYKKVKRNSSPPLSLYGQLLWREFFYTAATNNPRFDKMEGNPICVQIPWDKNPEALAKWAEGRTGFPWIDAIMTQLRQEGWIHHLARHAVACFLTRGDLWISWEEGMKVFEELLLDADWSINAGSWMWLSCSSFFQQFFHCYCPVGFGRRTDPNGDYIRRYLPVLRGFPAKYIYDPWNAPEGIQKVAKCLIGINYPKPMVNHAEASRLNIERMKQIYQQLSRYRGLGLLASVPSNPNGNGGFMGYSTENIPGCSSSGSCSQGSGILHYTHGDSQQTHLLKQGRSSMGTGLSGGKRPSQEEDTQSIGPKVQRQSTN</sequence>
<organism>
    <name type="scientific">Macaca fascicularis</name>
    <name type="common">Crab-eating macaque</name>
    <name type="synonym">Cynomolgus monkey</name>
    <dbReference type="NCBI Taxonomy" id="9541"/>
    <lineage>
        <taxon>Eukaryota</taxon>
        <taxon>Metazoa</taxon>
        <taxon>Chordata</taxon>
        <taxon>Craniata</taxon>
        <taxon>Vertebrata</taxon>
        <taxon>Euteleostomi</taxon>
        <taxon>Mammalia</taxon>
        <taxon>Eutheria</taxon>
        <taxon>Euarchontoglires</taxon>
        <taxon>Primates</taxon>
        <taxon>Haplorrhini</taxon>
        <taxon>Catarrhini</taxon>
        <taxon>Cercopithecidae</taxon>
        <taxon>Cercopithecinae</taxon>
        <taxon>Macaca</taxon>
    </lineage>
</organism>
<comment type="function">
    <text evidence="2 3">Transcriptional repressor which forms a core component of the circadian clock. The circadian clock, an internal time-keeping system, regulates various physiological processes through the generation of approximately 24 hour circadian rhythms in gene expression, which are translated into rhythms in metabolism and behavior. It is derived from the Latin roots 'circa' (about) and 'diem' (day) and acts as an important regulator of a wide array of physiological functions including metabolism, sleep, body temperature, blood pressure, endocrine, immune, cardiovascular, and renal function. Consists of two major components: the central clock, residing in the suprachiasmatic nucleus (SCN) of the brain, and the peripheral clocks that are present in nearly every tissue and organ system. Both the central and peripheral clocks can be reset by environmental cues, also known as Zeitgebers (German for 'timegivers'). The predominant Zeitgeber for the central clock is light, which is sensed by retina and signals directly to the SCN. The central clock entrains the peripheral clocks through neuronal and hormonal signals, body temperature and feeding-related cues, aligning all clocks with the external light/dark cycle. Circadian rhythms allow an organism to achieve temporal homeostasis with its environment at the molecular level by regulating gene expression to create a peak of protein expression once every 24 hours to control when a particular physiological process is most active with respect to the solar day. Transcription and translation of core clock components (CLOCK, NPAS2, BMAL1, BMAL2, PER1, PER2, PER3, CRY1 and CRY2) plays a critical role in rhythm generation, whereas delays imposed by post-translational modifications (PTMs) are important for determining the period (tau) of the rhythms (tau refers to the period of a rhythm and is the length, in time, of one complete cycle). A diurnal rhythm is synchronized with the day/night cycle, while the ultradian and infradian rhythms have a period shorter and longer than 24 hours, respectively. Disruptions in the circadian rhythms contribute to the pathology of cardiovascular diseases, cancer, metabolic syndromes and aging. A transcription/translation feedback loop (TTFL) forms the core of the molecular circadian clock mechanism. Transcription factors, CLOCK or NPAS2 and BMAL1 or BMAL2, form the positive limb of the feedback loop, act in the form of a heterodimer and activate the transcription of core clock genes and clock-controlled genes (involved in key metabolic processes), harboring E-box elements (5'-CACGTG-3') within their promoters. The core clock genes: PER1/2/3 and CRY1/2 which are transcriptional repressors form the negative limb of the feedback loop and interact with the CLOCK|NPAS2-BMAL1|BMAL2 heterodimer inhibiting its activity and thereby negatively regulating their own expression. This heterodimer also activates nuclear receptors NR1D1/2 and RORA/B/G, which form a second feedback loop and which activate and repress BMAL1 transcription, respectively. CRY1 and CRY2 have redundant functions but also differential and selective contributions at least in defining the pace of the SCN circadian clock and its circadian transcriptional outputs. More potent transcriptional repressor in cerebellum and liver than CRY2, though more effective in lengthening the period of the SCN oscillator. On its side, CRY2 seems to play a critical role in tuning SCN circadian period by opposing the action of CRY1. With CRY2, is dispensable for circadian rhythm generation but necessary for the development of intercellular networks for rhythm synchrony. Capable of translocating circadian clock core proteins such as PER proteins to the nucleus. Interacts with CLOCK-BMAL1 independently of PER proteins and is found at CLOCK-BMAL1-bound sites, suggesting that CRY may act as a molecular gatekeeper to maintainCLOCK-BMAL1 in a poised and repressed state until the proper time for transcriptional activation. Represses the CLOCK-BMAL1 induced transcription of BHLHE40/DEC1, ATF4, MTA1, KLF10 and NAMPT. May repress circadian target genes expression in collaboration with HDAC1 and HDAC2 through histone deacetylation. Mediates the clock-control activation of ATR and modulates ATR-mediated DNA damage checkpoint. In liver, mediates circadian regulation of cAMP signaling and gluconeogenesis by binding to membrane-coupled G proteins and blocking glucagon-mediated increases in intracellular cAMP concentrations and CREB1 phosphorylation. Inhibits hepatic gluconeogenesis by decreasing nuclear FOXO1 levels that down-regulates gluconeogenic gene expression. Besides its role in the maintenance of the circadian clock, is also involved in the regulation of other processes. Represses glucocorticoid receptor NR3C1/GR-induced transcriptional activity by binding to glucocorticoid response elements (GREs). Plays a key role in glucose and lipid metabolism modulation, in part, through the transcriptional regulation of genes involved in these pathways, such as LEP or ACSL4 (By similarity). Represses PPARD and its target genes in the skeletal muscle and limits exercise capacity (By similarity). Plays an essential role in the generation of circadian rhythms in the retina (By similarity). Represses the transcriptional activity of NR1I2 (By similarity).</text>
</comment>
<comment type="cofactor">
    <cofactor evidence="2">
        <name>FAD</name>
        <dbReference type="ChEBI" id="CHEBI:57692"/>
    </cofactor>
    <text evidence="2">Binds 1 FAD per subunit. Only a minority of the protein molecules contain bound FAD. Contrary to the situation in photolyases, the FAD is bound in a shallow, surface-exposed pocket.</text>
</comment>
<comment type="cofactor">
    <cofactor evidence="1">
        <name>(6R)-5,10-methylene-5,6,7,8-tetrahydrofolate</name>
        <dbReference type="ChEBI" id="CHEBI:15636"/>
    </cofactor>
    <text evidence="1">Binds 1 5,10-methenyltetrahydrofolate (MTHF) non-covalently per subunit.</text>
</comment>
<comment type="subunit">
    <text evidence="2 3">Component of the circadian core oscillator, which includes the CRY proteins, CLOCK or NPAS2, BMAL1 or BMAL2, CSNK1D and/or CSNK1E, TIMELESS, and the PER proteins (By similarity). Interacts directly with TIMELESS (By similarity). Interacts directly with PER1, PER2 and PER3; interaction with PER2 inhibits its ubiquitination and vice versa (By similarity). Interacts with FBXL21 (By similarity). Interacts with FBXL3 (By similarity). Interacts with CLOCK-BMAL1 independently of PER2 and DNA (By similarity). Interacts with HDAC1, HDAC2 and SIN3B (By similarity). Interacts with nuclear receptors AR, NR1D1, NR3C1/GR, RORA and RORC; the interaction with at least NR3C1/GR is ligand dependent (By similarity). Interacts with PRKDC (By similarity). Interacts with the G protein subunit alpha GNAS; the interaction may block GPCR-mediated regulation of cAMP concentrations (By similarity). Interacts with PRMT5 (By similarity). Interacts with EZH2 (By similarity). Interacts with MYBBP1A, DOCK7, HNRNPU, RPL7A, RPL8 and RPS3 (By similarity). Interacts with PPP5C (via TPR repeats) (By similarity). Interacts with MAP1LC3B (By similarity). Interacts with CLOCK (By similarity). Interacts with BMAL1 (By similarity). Interacts weakly with HDAC3; this interaction is enhanced in the presence of FBXL3 (By similarity). Interacts with TRIM28, KCTD5 and DDB1 (By similarity). Interacts with FOXO1 (By similarity). Interacts with DTL and DDB1-CUL4A complex (By similarity). Interacts with HNF4A (By similarity). Interacts with PSMD2 in a KDM8-dependent manner (By similarity). Interacts with KDM8 in a FBXL3-dependent manner (By similarity). Interacts with PPARG in a ligand-dependent manner (By similarity). Interacts with PPARD (via domain NR LBD) and NR1I2 (via domain NR LBD) in a ligand-dependent manner (By similarity). Interacts with PPARA, NR1I3 and VDR (By similarity).</text>
</comment>
<comment type="subcellular location">
    <subcellularLocation>
        <location evidence="2">Cytoplasm</location>
    </subcellularLocation>
    <subcellularLocation>
        <location evidence="2">Nucleus</location>
    </subcellularLocation>
    <text evidence="2">Translocated to the nucleus through interaction with other clock proteins such as PER2 or BMAL1.</text>
</comment>
<comment type="domain">
    <text evidence="2">The LIR motifs (LC3-interacting region) 3 and 5 are required for its interaction with MAP1LC3B and for its autophagy-mediated degradation.</text>
</comment>
<comment type="PTM">
    <text evidence="2">Phosphorylation on Ser-247 by MAPK is important for the inhibition of CLOCK-BMAL1-mediated transcriptional activity. Phosphorylation by CSNK1E requires interaction with PER1 or PER2. Phosphorylation at Ser-71 and Ser-280 by AMPK decreases protein stability. Phosphorylation at Ser-568 exhibits a robust circadian rhythm with a peak at CT8, increases protein stability, prevents SCF(FBXL3)-mediated degradation and is antagonized by interaction with PRKDC.</text>
</comment>
<comment type="PTM">
    <text evidence="2">Ubiquitinated by the SCF(FBXL3) and SCF(FBXL21) complexes, regulating the balance between degradation and stabilization (By similarity). The SCF(FBXL3) complex is mainly nuclear and mediates ubiquitination and subsequent degradation of CRY1 (By similarity). In contrast, cytoplasmic SCF(FBXL21) complex-mediated ubiquitination leads to stabilize CRY1 and counteract the activity of the SCF(FBXL3) complex (By similarity). The SCF(FBXL3) and SCF(FBXL21) complexes probably mediate ubiquitination at different Lys residues (By similarity). Ubiquitination at Lys-11 and Lys-107 are specifically ubiquitinated by the SCF(FBXL21) complex but not by the SCF(FBXL3) complex (By similarity). Ubiquitination may be inhibited by PER2 (By similarity). Deubiquitinated by USP7 (By similarity).</text>
</comment>
<comment type="PTM">
    <text evidence="2">Undergoes autophagy-mediated degradation in the liver in a time-dependent manner. Autophagic degradation of CRY1 (an inhibitor of gluconeogenesis) occurs during periods of reduced feeding allowing induction of gluconeogenesis and maintenance of blood glucose levels.</text>
</comment>
<comment type="similarity">
    <text evidence="5">Belongs to the DNA photolyase class-1 family.</text>
</comment>